<evidence type="ECO:0000255" key="1">
    <source>
        <dbReference type="PROSITE-ProRule" id="PRU00345"/>
    </source>
</evidence>
<evidence type="ECO:0007829" key="2">
    <source>
        <dbReference type="PDB" id="4EM0"/>
    </source>
</evidence>
<evidence type="ECO:0007829" key="3">
    <source>
        <dbReference type="PDB" id="4EM1"/>
    </source>
</evidence>
<evidence type="ECO:0007829" key="4">
    <source>
        <dbReference type="PDB" id="4EM2"/>
    </source>
</evidence>
<feature type="chain" id="PRO_0000054415" description="Uncharacterized HTH-type transcriptional regulator SAR2349">
    <location>
        <begin position="1"/>
        <end position="146"/>
    </location>
</feature>
<feature type="domain" description="HTH marR-type" evidence="1">
    <location>
        <begin position="1"/>
        <end position="137"/>
    </location>
</feature>
<feature type="helix" evidence="4">
    <location>
        <begin position="2"/>
        <end position="11"/>
    </location>
</feature>
<feature type="helix" evidence="4">
    <location>
        <begin position="14"/>
        <end position="27"/>
    </location>
</feature>
<feature type="helix" evidence="4">
    <location>
        <begin position="32"/>
        <end position="44"/>
    </location>
</feature>
<feature type="strand" evidence="2">
    <location>
        <begin position="46"/>
        <end position="48"/>
    </location>
</feature>
<feature type="helix" evidence="4">
    <location>
        <begin position="49"/>
        <end position="56"/>
    </location>
</feature>
<feature type="helix" evidence="4">
    <location>
        <begin position="60"/>
        <end position="72"/>
    </location>
</feature>
<feature type="strand" evidence="4">
    <location>
        <begin position="75"/>
        <end position="78"/>
    </location>
</feature>
<feature type="strand" evidence="3">
    <location>
        <begin position="81"/>
        <end position="83"/>
    </location>
</feature>
<feature type="helix" evidence="4">
    <location>
        <begin position="85"/>
        <end position="87"/>
    </location>
</feature>
<feature type="strand" evidence="4">
    <location>
        <begin position="90"/>
        <end position="92"/>
    </location>
</feature>
<feature type="helix" evidence="4">
    <location>
        <begin position="94"/>
        <end position="116"/>
    </location>
</feature>
<feature type="helix" evidence="4">
    <location>
        <begin position="122"/>
        <end position="142"/>
    </location>
</feature>
<organism>
    <name type="scientific">Staphylococcus aureus (strain MRSA252)</name>
    <dbReference type="NCBI Taxonomy" id="282458"/>
    <lineage>
        <taxon>Bacteria</taxon>
        <taxon>Bacillati</taxon>
        <taxon>Bacillota</taxon>
        <taxon>Bacilli</taxon>
        <taxon>Bacillales</taxon>
        <taxon>Staphylococcaceae</taxon>
        <taxon>Staphylococcus</taxon>
    </lineage>
</organism>
<protein>
    <recommendedName>
        <fullName>Uncharacterized HTH-type transcriptional regulator SAR2349</fullName>
    </recommendedName>
</protein>
<reference key="1">
    <citation type="journal article" date="2004" name="Proc. Natl. Acad. Sci. U.S.A.">
        <title>Complete genomes of two clinical Staphylococcus aureus strains: evidence for the rapid evolution of virulence and drug resistance.</title>
        <authorList>
            <person name="Holden M.T.G."/>
            <person name="Feil E.J."/>
            <person name="Lindsay J.A."/>
            <person name="Peacock S.J."/>
            <person name="Day N.P.J."/>
            <person name="Enright M.C."/>
            <person name="Foster T.J."/>
            <person name="Moore C.E."/>
            <person name="Hurst L."/>
            <person name="Atkin R."/>
            <person name="Barron A."/>
            <person name="Bason N."/>
            <person name="Bentley S.D."/>
            <person name="Chillingworth C."/>
            <person name="Chillingworth T."/>
            <person name="Churcher C."/>
            <person name="Clark L."/>
            <person name="Corton C."/>
            <person name="Cronin A."/>
            <person name="Doggett J."/>
            <person name="Dowd L."/>
            <person name="Feltwell T."/>
            <person name="Hance Z."/>
            <person name="Harris B."/>
            <person name="Hauser H."/>
            <person name="Holroyd S."/>
            <person name="Jagels K."/>
            <person name="James K.D."/>
            <person name="Lennard N."/>
            <person name="Line A."/>
            <person name="Mayes R."/>
            <person name="Moule S."/>
            <person name="Mungall K."/>
            <person name="Ormond D."/>
            <person name="Quail M.A."/>
            <person name="Rabbinowitsch E."/>
            <person name="Rutherford K.M."/>
            <person name="Sanders M."/>
            <person name="Sharp S."/>
            <person name="Simmonds M."/>
            <person name="Stevens K."/>
            <person name="Whitehead S."/>
            <person name="Barrell B.G."/>
            <person name="Spratt B.G."/>
            <person name="Parkhill J."/>
        </authorList>
    </citation>
    <scope>NUCLEOTIDE SEQUENCE [LARGE SCALE GENOMIC DNA]</scope>
    <source>
        <strain>MRSA252</strain>
    </source>
</reference>
<keyword id="KW-0002">3D-structure</keyword>
<keyword id="KW-0238">DNA-binding</keyword>
<keyword id="KW-0804">Transcription</keyword>
<keyword id="KW-0805">Transcription regulation</keyword>
<dbReference type="EMBL" id="BX571856">
    <property type="protein sequence ID" value="CAG41330.1"/>
    <property type="molecule type" value="Genomic_DNA"/>
</dbReference>
<dbReference type="RefSeq" id="WP_000951069.1">
    <property type="nucleotide sequence ID" value="NC_002952.2"/>
</dbReference>
<dbReference type="PDB" id="4EM0">
    <property type="method" value="X-ray"/>
    <property type="resolution" value="2.90 A"/>
    <property type="chains" value="B=1-146"/>
</dbReference>
<dbReference type="PDB" id="4EM1">
    <property type="method" value="X-ray"/>
    <property type="resolution" value="3.00 A"/>
    <property type="chains" value="A=1-146"/>
</dbReference>
<dbReference type="PDB" id="4EM2">
    <property type="method" value="X-ray"/>
    <property type="resolution" value="2.08 A"/>
    <property type="chains" value="A=1-146"/>
</dbReference>
<dbReference type="PDBsum" id="4EM0"/>
<dbReference type="PDBsum" id="4EM1"/>
<dbReference type="PDBsum" id="4EM2"/>
<dbReference type="SMR" id="Q6GEG9"/>
<dbReference type="KEGG" id="sar:SAR2349"/>
<dbReference type="HOGENOM" id="CLU_083287_18_2_9"/>
<dbReference type="EvolutionaryTrace" id="Q6GEG9"/>
<dbReference type="Proteomes" id="UP000000596">
    <property type="component" value="Chromosome"/>
</dbReference>
<dbReference type="GO" id="GO:0003677">
    <property type="term" value="F:DNA binding"/>
    <property type="evidence" value="ECO:0007669"/>
    <property type="project" value="UniProtKB-KW"/>
</dbReference>
<dbReference type="GO" id="GO:0003700">
    <property type="term" value="F:DNA-binding transcription factor activity"/>
    <property type="evidence" value="ECO:0007669"/>
    <property type="project" value="InterPro"/>
</dbReference>
<dbReference type="GO" id="GO:0006950">
    <property type="term" value="P:response to stress"/>
    <property type="evidence" value="ECO:0007669"/>
    <property type="project" value="TreeGrafter"/>
</dbReference>
<dbReference type="FunFam" id="1.10.10.10:FF:000684">
    <property type="entry name" value="Transcriptional regulator, MarR family"/>
    <property type="match status" value="1"/>
</dbReference>
<dbReference type="Gene3D" id="1.10.10.10">
    <property type="entry name" value="Winged helix-like DNA-binding domain superfamily/Winged helix DNA-binding domain"/>
    <property type="match status" value="1"/>
</dbReference>
<dbReference type="InterPro" id="IPR000835">
    <property type="entry name" value="HTH_MarR-typ"/>
</dbReference>
<dbReference type="InterPro" id="IPR039422">
    <property type="entry name" value="MarR/SlyA-like"/>
</dbReference>
<dbReference type="InterPro" id="IPR023187">
    <property type="entry name" value="Tscrpt_reg_MarR-type_CS"/>
</dbReference>
<dbReference type="InterPro" id="IPR036388">
    <property type="entry name" value="WH-like_DNA-bd_sf"/>
</dbReference>
<dbReference type="InterPro" id="IPR036390">
    <property type="entry name" value="WH_DNA-bd_sf"/>
</dbReference>
<dbReference type="PANTHER" id="PTHR33164">
    <property type="entry name" value="TRANSCRIPTIONAL REGULATOR, MARR FAMILY"/>
    <property type="match status" value="1"/>
</dbReference>
<dbReference type="PANTHER" id="PTHR33164:SF44">
    <property type="entry name" value="TRANSCRIPTIONAL REGULATORY PROTEIN"/>
    <property type="match status" value="1"/>
</dbReference>
<dbReference type="Pfam" id="PF01047">
    <property type="entry name" value="MarR"/>
    <property type="match status" value="1"/>
</dbReference>
<dbReference type="SMART" id="SM00347">
    <property type="entry name" value="HTH_MARR"/>
    <property type="match status" value="1"/>
</dbReference>
<dbReference type="SUPFAM" id="SSF46785">
    <property type="entry name" value="Winged helix' DNA-binding domain"/>
    <property type="match status" value="1"/>
</dbReference>
<dbReference type="PROSITE" id="PS01117">
    <property type="entry name" value="HTH_MARR_1"/>
    <property type="match status" value="1"/>
</dbReference>
<dbReference type="PROSITE" id="PS50995">
    <property type="entry name" value="HTH_MARR_2"/>
    <property type="match status" value="1"/>
</dbReference>
<accession>Q6GEG9</accession>
<gene>
    <name type="ordered locus">SAR2349</name>
</gene>
<proteinExistence type="evidence at protein level"/>
<name>Y2349_STAAR</name>
<sequence>MLSQEFFNSFITIYRPYLKLTEPILEKHNIYYGQWLILRDIAKHQPTTLIEISHRRAIEKPTARKTLKALIENDLITVENSLEDKRQKFLTLTPKGHELYEIVCLDVQKLQQAVVAKTNISQDQMQETINVMNQIHEILLKEAHND</sequence>